<organism>
    <name type="scientific">Shigella boydii serotype 4 (strain Sb227)</name>
    <dbReference type="NCBI Taxonomy" id="300268"/>
    <lineage>
        <taxon>Bacteria</taxon>
        <taxon>Pseudomonadati</taxon>
        <taxon>Pseudomonadota</taxon>
        <taxon>Gammaproteobacteria</taxon>
        <taxon>Enterobacterales</taxon>
        <taxon>Enterobacteriaceae</taxon>
        <taxon>Shigella</taxon>
    </lineage>
</organism>
<sequence length="502" mass="56231">MTEKKYIVALDQGTTSSRAVVMDHDANIISVSQREFEQIYPKPGWVEHDPMEIWATQSSTLVEVLAKADISSDQIAAIGITNQRETTIVWEKETGKPIYNAIVWQCRRTAEICEHLKRDGLEDYIRSNTGLVIDPYFSGTKVKWILDHVEGSRERARRGELLFGTVDTWLIWKMTQGRVHVTDYTNASRTMLFNIHTLDWDDKMLEVLDIPREMLPEVRRSSEVYGQTNIGGKGGTRIPISGIAGDQQAALFGQLCVKEGMAKNTYGTGCFMLMNTGEKAVKSENGLLTTIACGPTGEVNYALEGAVFMAGASIQWLRDEMKLINDAYDSEYFATKVQNTNGVYVVPAFTGLGAPYWDPYARGAIFGLTRGVNANHIIRATLESIAYQTRDVLEAMQADSGIRLHALRVDGGAVANNFLMQFQSDILGTRVERPEVREVTALGAAYLAGLAVGFWQNLDELQEKAVIEREFRPGIETTERNYRYAGWKKAVKRAMAWEEHDE</sequence>
<name>GLPK_SHIBS</name>
<feature type="chain" id="PRO_1000020786" description="Glycerol kinase">
    <location>
        <begin position="1"/>
        <end position="502"/>
    </location>
</feature>
<feature type="binding site" evidence="1">
    <location>
        <position position="14"/>
    </location>
    <ligand>
        <name>ADP</name>
        <dbReference type="ChEBI" id="CHEBI:456216"/>
    </ligand>
</feature>
<feature type="binding site" evidence="1">
    <location>
        <position position="14"/>
    </location>
    <ligand>
        <name>ATP</name>
        <dbReference type="ChEBI" id="CHEBI:30616"/>
    </ligand>
</feature>
<feature type="binding site" evidence="1">
    <location>
        <position position="14"/>
    </location>
    <ligand>
        <name>sn-glycerol 3-phosphate</name>
        <dbReference type="ChEBI" id="CHEBI:57597"/>
    </ligand>
</feature>
<feature type="binding site" evidence="1">
    <location>
        <position position="15"/>
    </location>
    <ligand>
        <name>ATP</name>
        <dbReference type="ChEBI" id="CHEBI:30616"/>
    </ligand>
</feature>
<feature type="binding site" evidence="1">
    <location>
        <position position="16"/>
    </location>
    <ligand>
        <name>ATP</name>
        <dbReference type="ChEBI" id="CHEBI:30616"/>
    </ligand>
</feature>
<feature type="binding site" evidence="1">
    <location>
        <position position="18"/>
    </location>
    <ligand>
        <name>ADP</name>
        <dbReference type="ChEBI" id="CHEBI:456216"/>
    </ligand>
</feature>
<feature type="binding site" evidence="1">
    <location>
        <position position="84"/>
    </location>
    <ligand>
        <name>glycerol</name>
        <dbReference type="ChEBI" id="CHEBI:17754"/>
    </ligand>
</feature>
<feature type="binding site" evidence="1">
    <location>
        <position position="84"/>
    </location>
    <ligand>
        <name>sn-glycerol 3-phosphate</name>
        <dbReference type="ChEBI" id="CHEBI:57597"/>
    </ligand>
</feature>
<feature type="binding site" evidence="1">
    <location>
        <position position="85"/>
    </location>
    <ligand>
        <name>glycerol</name>
        <dbReference type="ChEBI" id="CHEBI:17754"/>
    </ligand>
</feature>
<feature type="binding site" evidence="1">
    <location>
        <position position="85"/>
    </location>
    <ligand>
        <name>sn-glycerol 3-phosphate</name>
        <dbReference type="ChEBI" id="CHEBI:57597"/>
    </ligand>
</feature>
<feature type="binding site" evidence="1">
    <location>
        <position position="136"/>
    </location>
    <ligand>
        <name>glycerol</name>
        <dbReference type="ChEBI" id="CHEBI:17754"/>
    </ligand>
</feature>
<feature type="binding site" evidence="1">
    <location>
        <position position="136"/>
    </location>
    <ligand>
        <name>sn-glycerol 3-phosphate</name>
        <dbReference type="ChEBI" id="CHEBI:57597"/>
    </ligand>
</feature>
<feature type="binding site" evidence="1">
    <location>
        <position position="246"/>
    </location>
    <ligand>
        <name>glycerol</name>
        <dbReference type="ChEBI" id="CHEBI:17754"/>
    </ligand>
</feature>
<feature type="binding site" evidence="1">
    <location>
        <position position="246"/>
    </location>
    <ligand>
        <name>sn-glycerol 3-phosphate</name>
        <dbReference type="ChEBI" id="CHEBI:57597"/>
    </ligand>
</feature>
<feature type="binding site" evidence="1">
    <location>
        <position position="247"/>
    </location>
    <ligand>
        <name>glycerol</name>
        <dbReference type="ChEBI" id="CHEBI:17754"/>
    </ligand>
</feature>
<feature type="binding site" evidence="1">
    <location>
        <position position="268"/>
    </location>
    <ligand>
        <name>ADP</name>
        <dbReference type="ChEBI" id="CHEBI:456216"/>
    </ligand>
</feature>
<feature type="binding site" evidence="1">
    <location>
        <position position="268"/>
    </location>
    <ligand>
        <name>ATP</name>
        <dbReference type="ChEBI" id="CHEBI:30616"/>
    </ligand>
</feature>
<feature type="binding site" evidence="1">
    <location>
        <position position="311"/>
    </location>
    <ligand>
        <name>ADP</name>
        <dbReference type="ChEBI" id="CHEBI:456216"/>
    </ligand>
</feature>
<feature type="binding site" evidence="1">
    <location>
        <position position="311"/>
    </location>
    <ligand>
        <name>ATP</name>
        <dbReference type="ChEBI" id="CHEBI:30616"/>
    </ligand>
</feature>
<feature type="binding site" evidence="1">
    <location>
        <position position="315"/>
    </location>
    <ligand>
        <name>ATP</name>
        <dbReference type="ChEBI" id="CHEBI:30616"/>
    </ligand>
</feature>
<feature type="binding site" evidence="1">
    <location>
        <position position="412"/>
    </location>
    <ligand>
        <name>ADP</name>
        <dbReference type="ChEBI" id="CHEBI:456216"/>
    </ligand>
</feature>
<feature type="binding site" evidence="1">
    <location>
        <position position="412"/>
    </location>
    <ligand>
        <name>ATP</name>
        <dbReference type="ChEBI" id="CHEBI:30616"/>
    </ligand>
</feature>
<feature type="binding site" evidence="1">
    <location>
        <position position="416"/>
    </location>
    <ligand>
        <name>ADP</name>
        <dbReference type="ChEBI" id="CHEBI:456216"/>
    </ligand>
</feature>
<reference key="1">
    <citation type="journal article" date="2005" name="Nucleic Acids Res.">
        <title>Genome dynamics and diversity of Shigella species, the etiologic agents of bacillary dysentery.</title>
        <authorList>
            <person name="Yang F."/>
            <person name="Yang J."/>
            <person name="Zhang X."/>
            <person name="Chen L."/>
            <person name="Jiang Y."/>
            <person name="Yan Y."/>
            <person name="Tang X."/>
            <person name="Wang J."/>
            <person name="Xiong Z."/>
            <person name="Dong J."/>
            <person name="Xue Y."/>
            <person name="Zhu Y."/>
            <person name="Xu X."/>
            <person name="Sun L."/>
            <person name="Chen S."/>
            <person name="Nie H."/>
            <person name="Peng J."/>
            <person name="Xu J."/>
            <person name="Wang Y."/>
            <person name="Yuan Z."/>
            <person name="Wen Y."/>
            <person name="Yao Z."/>
            <person name="Shen Y."/>
            <person name="Qiang B."/>
            <person name="Hou Y."/>
            <person name="Yu J."/>
            <person name="Jin Q."/>
        </authorList>
    </citation>
    <scope>NUCLEOTIDE SEQUENCE [LARGE SCALE GENOMIC DNA]</scope>
    <source>
        <strain>Sb227</strain>
    </source>
</reference>
<comment type="function">
    <text evidence="1">Key enzyme in the regulation of glycerol uptake and metabolism. Catalyzes the phosphorylation of glycerol to yield sn-glycerol 3-phosphate.</text>
</comment>
<comment type="catalytic activity">
    <reaction evidence="1">
        <text>glycerol + ATP = sn-glycerol 3-phosphate + ADP + H(+)</text>
        <dbReference type="Rhea" id="RHEA:21644"/>
        <dbReference type="ChEBI" id="CHEBI:15378"/>
        <dbReference type="ChEBI" id="CHEBI:17754"/>
        <dbReference type="ChEBI" id="CHEBI:30616"/>
        <dbReference type="ChEBI" id="CHEBI:57597"/>
        <dbReference type="ChEBI" id="CHEBI:456216"/>
        <dbReference type="EC" id="2.7.1.30"/>
    </reaction>
</comment>
<comment type="activity regulation">
    <text evidence="1">Activity of this regulatory enzyme is affected by several metabolites. Allosterically and non-competitively inhibited by fructose 1,6-bisphosphate (FBP) and unphosphorylated phosphocarrier protein EIIA-Glc (III-Glc), an integral component of the bacterial phosphotransferase (PTS) system.</text>
</comment>
<comment type="pathway">
    <text evidence="1">Polyol metabolism; glycerol degradation via glycerol kinase pathway; sn-glycerol 3-phosphate from glycerol: step 1/1.</text>
</comment>
<comment type="subunit">
    <text evidence="1">Homotetramer and homodimer (in equilibrium). Heterodimer with EIIA-Glc. Binds 1 zinc ion per glycerol kinase EIIA-Glc dimer. The zinc ion is important for dimerization.</text>
</comment>
<comment type="similarity">
    <text evidence="1">Belongs to the FGGY kinase family.</text>
</comment>
<proteinExistence type="inferred from homology"/>
<accession>Q31U64</accession>
<protein>
    <recommendedName>
        <fullName evidence="1">Glycerol kinase</fullName>
        <ecNumber evidence="1">2.7.1.30</ecNumber>
    </recommendedName>
    <alternativeName>
        <fullName evidence="1">ATP:glycerol 3-phosphotransferase</fullName>
    </alternativeName>
    <alternativeName>
        <fullName evidence="1">Glycerokinase</fullName>
        <shortName evidence="1">GK</shortName>
    </alternativeName>
</protein>
<dbReference type="EC" id="2.7.1.30" evidence="1"/>
<dbReference type="EMBL" id="CP000036">
    <property type="protein sequence ID" value="ABB68394.1"/>
    <property type="molecule type" value="Genomic_DNA"/>
</dbReference>
<dbReference type="RefSeq" id="WP_000136788.1">
    <property type="nucleotide sequence ID" value="NC_007613.1"/>
</dbReference>
<dbReference type="SMR" id="Q31U64"/>
<dbReference type="GeneID" id="75169366"/>
<dbReference type="KEGG" id="sbo:SBO_3943"/>
<dbReference type="HOGENOM" id="CLU_009281_2_3_6"/>
<dbReference type="UniPathway" id="UPA00618">
    <property type="reaction ID" value="UER00672"/>
</dbReference>
<dbReference type="Proteomes" id="UP000007067">
    <property type="component" value="Chromosome"/>
</dbReference>
<dbReference type="GO" id="GO:0005829">
    <property type="term" value="C:cytosol"/>
    <property type="evidence" value="ECO:0007669"/>
    <property type="project" value="TreeGrafter"/>
</dbReference>
<dbReference type="GO" id="GO:0005524">
    <property type="term" value="F:ATP binding"/>
    <property type="evidence" value="ECO:0007669"/>
    <property type="project" value="UniProtKB-UniRule"/>
</dbReference>
<dbReference type="GO" id="GO:0004370">
    <property type="term" value="F:glycerol kinase activity"/>
    <property type="evidence" value="ECO:0000250"/>
    <property type="project" value="UniProtKB"/>
</dbReference>
<dbReference type="GO" id="GO:0046872">
    <property type="term" value="F:metal ion binding"/>
    <property type="evidence" value="ECO:0007669"/>
    <property type="project" value="UniProtKB-KW"/>
</dbReference>
<dbReference type="GO" id="GO:0019563">
    <property type="term" value="P:glycerol catabolic process"/>
    <property type="evidence" value="ECO:0007669"/>
    <property type="project" value="UniProtKB-UniRule"/>
</dbReference>
<dbReference type="GO" id="GO:0006071">
    <property type="term" value="P:glycerol metabolic process"/>
    <property type="evidence" value="ECO:0000250"/>
    <property type="project" value="UniProtKB"/>
</dbReference>
<dbReference type="GO" id="GO:0006072">
    <property type="term" value="P:glycerol-3-phosphate metabolic process"/>
    <property type="evidence" value="ECO:0007669"/>
    <property type="project" value="InterPro"/>
</dbReference>
<dbReference type="CDD" id="cd07786">
    <property type="entry name" value="FGGY_EcGK_like"/>
    <property type="match status" value="1"/>
</dbReference>
<dbReference type="FunFam" id="3.30.420.40:FF:000007">
    <property type="entry name" value="Glycerol kinase"/>
    <property type="match status" value="1"/>
</dbReference>
<dbReference type="FunFam" id="3.30.420.40:FF:000008">
    <property type="entry name" value="Glycerol kinase"/>
    <property type="match status" value="1"/>
</dbReference>
<dbReference type="Gene3D" id="3.30.420.40">
    <property type="match status" value="2"/>
</dbReference>
<dbReference type="HAMAP" id="MF_00186">
    <property type="entry name" value="Glycerol_kin"/>
    <property type="match status" value="1"/>
</dbReference>
<dbReference type="InterPro" id="IPR043129">
    <property type="entry name" value="ATPase_NBD"/>
</dbReference>
<dbReference type="InterPro" id="IPR000577">
    <property type="entry name" value="Carb_kinase_FGGY"/>
</dbReference>
<dbReference type="InterPro" id="IPR018483">
    <property type="entry name" value="Carb_kinase_FGGY_CS"/>
</dbReference>
<dbReference type="InterPro" id="IPR018485">
    <property type="entry name" value="FGGY_C"/>
</dbReference>
<dbReference type="InterPro" id="IPR018484">
    <property type="entry name" value="FGGY_N"/>
</dbReference>
<dbReference type="InterPro" id="IPR005999">
    <property type="entry name" value="Glycerol_kin"/>
</dbReference>
<dbReference type="NCBIfam" id="TIGR01311">
    <property type="entry name" value="glycerol_kin"/>
    <property type="match status" value="1"/>
</dbReference>
<dbReference type="NCBIfam" id="NF000756">
    <property type="entry name" value="PRK00047.1"/>
    <property type="match status" value="1"/>
</dbReference>
<dbReference type="PANTHER" id="PTHR10196:SF69">
    <property type="entry name" value="GLYCEROL KINASE"/>
    <property type="match status" value="1"/>
</dbReference>
<dbReference type="PANTHER" id="PTHR10196">
    <property type="entry name" value="SUGAR KINASE"/>
    <property type="match status" value="1"/>
</dbReference>
<dbReference type="Pfam" id="PF02782">
    <property type="entry name" value="FGGY_C"/>
    <property type="match status" value="1"/>
</dbReference>
<dbReference type="Pfam" id="PF00370">
    <property type="entry name" value="FGGY_N"/>
    <property type="match status" value="1"/>
</dbReference>
<dbReference type="PIRSF" id="PIRSF000538">
    <property type="entry name" value="GlpK"/>
    <property type="match status" value="1"/>
</dbReference>
<dbReference type="SUPFAM" id="SSF53067">
    <property type="entry name" value="Actin-like ATPase domain"/>
    <property type="match status" value="2"/>
</dbReference>
<dbReference type="PROSITE" id="PS00933">
    <property type="entry name" value="FGGY_KINASES_1"/>
    <property type="match status" value="1"/>
</dbReference>
<dbReference type="PROSITE" id="PS00445">
    <property type="entry name" value="FGGY_KINASES_2"/>
    <property type="match status" value="1"/>
</dbReference>
<keyword id="KW-0021">Allosteric enzyme</keyword>
<keyword id="KW-0067">ATP-binding</keyword>
<keyword id="KW-0319">Glycerol metabolism</keyword>
<keyword id="KW-0418">Kinase</keyword>
<keyword id="KW-0479">Metal-binding</keyword>
<keyword id="KW-0547">Nucleotide-binding</keyword>
<keyword id="KW-0808">Transferase</keyword>
<keyword id="KW-0862">Zinc</keyword>
<gene>
    <name evidence="1" type="primary">glpK</name>
    <name type="ordered locus">SBO_3943</name>
</gene>
<evidence type="ECO:0000255" key="1">
    <source>
        <dbReference type="HAMAP-Rule" id="MF_00186"/>
    </source>
</evidence>